<protein>
    <recommendedName>
        <fullName evidence="1">Hydroxylamine reductase</fullName>
        <ecNumber evidence="1">1.7.99.1</ecNumber>
    </recommendedName>
    <alternativeName>
        <fullName evidence="1">Hybrid-cluster protein</fullName>
        <shortName evidence="1">HCP</shortName>
    </alternativeName>
    <alternativeName>
        <fullName evidence="1">Prismane protein</fullName>
    </alternativeName>
</protein>
<reference key="1">
    <citation type="submission" date="2008-10" db="EMBL/GenBank/DDBJ databases">
        <title>Genome sequence of Clostridium botulinum A2 Kyoto.</title>
        <authorList>
            <person name="Shrivastava S."/>
            <person name="Brinkac L.M."/>
            <person name="Brown J.L."/>
            <person name="Bruce D."/>
            <person name="Detter C.C."/>
            <person name="Johnson E.A."/>
            <person name="Munk C.A."/>
            <person name="Smith L.A."/>
            <person name="Smith T.J."/>
            <person name="Sutton G."/>
            <person name="Brettin T.S."/>
        </authorList>
    </citation>
    <scope>NUCLEOTIDE SEQUENCE [LARGE SCALE GENOMIC DNA]</scope>
    <source>
        <strain>Kyoto / Type A2</strain>
    </source>
</reference>
<gene>
    <name evidence="1" type="primary">hcp</name>
    <name type="ordered locus">CLM_3158</name>
</gene>
<sequence>MSMFCYQCQEAAGGRGCTVKGVCGKTEDIAKTQDLIIYVVKGIAIYSSQAREMGLNTSEADKFIVESLFSTITNANFDAKALNARVQKGLKIRQSLKDAIIKAGGSYNSKENKSWTSKFLSVLGIKNDKDEKEIHDAAVWAANNPEDFKKKAETVGVLATENEDIRSLRELLTYGLKGMAAYLEHANNLGYDEDSIHAFMEKALVATLDDTLSADELTALVLECGKYGVDVMALLDKANTSTYGNPEITKVNIGVRNNPGILISGHDLKDMEELLKQTEGTGVDVYTHSEMLPANYYPAFKKYKHFVGNYGNAWWKQNEEFEAFNGPILMTTNCIVTPKASYKDRMYTTGVTGFEGVKHINTSKDGKKDFSEIIEHAKRCTSPKEIEKGEIIGGFAHNQVLALAPQVVDAVKTGAIKRFFVMAGCDGRMKSRNYYTDFAKALPKDTVILTAGCAKYKYNKLDLGDINGIPRVLDAGQCNDSYSLAVIALKLKEVFELEDINELPISYNIAWYEQKAVIVLLALLHLGVKNIHLGPTLPAFLSPNVAKILVENFGIGTISSVDEDIKMFMN</sequence>
<accession>C1FUX4</accession>
<organism>
    <name type="scientific">Clostridium botulinum (strain Kyoto / Type A2)</name>
    <dbReference type="NCBI Taxonomy" id="536232"/>
    <lineage>
        <taxon>Bacteria</taxon>
        <taxon>Bacillati</taxon>
        <taxon>Bacillota</taxon>
        <taxon>Clostridia</taxon>
        <taxon>Eubacteriales</taxon>
        <taxon>Clostridiaceae</taxon>
        <taxon>Clostridium</taxon>
    </lineage>
</organism>
<feature type="chain" id="PRO_1000118016" description="Hydroxylamine reductase">
    <location>
        <begin position="1"/>
        <end position="570"/>
    </location>
</feature>
<feature type="binding site" evidence="1">
    <location>
        <position position="5"/>
    </location>
    <ligand>
        <name>[4Fe-4S] cluster</name>
        <dbReference type="ChEBI" id="CHEBI:49883"/>
    </ligand>
</feature>
<feature type="binding site" evidence="1">
    <location>
        <position position="8"/>
    </location>
    <ligand>
        <name>[4Fe-4S] cluster</name>
        <dbReference type="ChEBI" id="CHEBI:49883"/>
    </ligand>
</feature>
<feature type="binding site" evidence="1">
    <location>
        <position position="17"/>
    </location>
    <ligand>
        <name>[4Fe-4S] cluster</name>
        <dbReference type="ChEBI" id="CHEBI:49883"/>
    </ligand>
</feature>
<feature type="binding site" evidence="1">
    <location>
        <position position="23"/>
    </location>
    <ligand>
        <name>[4Fe-4S] cluster</name>
        <dbReference type="ChEBI" id="CHEBI:49883"/>
    </ligand>
</feature>
<feature type="binding site" evidence="1">
    <location>
        <position position="266"/>
    </location>
    <ligand>
        <name>hybrid [4Fe-2O-2S] cluster</name>
        <dbReference type="ChEBI" id="CHEBI:60519"/>
    </ligand>
</feature>
<feature type="binding site" evidence="1">
    <location>
        <position position="290"/>
    </location>
    <ligand>
        <name>hybrid [4Fe-2O-2S] cluster</name>
        <dbReference type="ChEBI" id="CHEBI:60519"/>
    </ligand>
</feature>
<feature type="binding site" evidence="1">
    <location>
        <position position="334"/>
    </location>
    <ligand>
        <name>hybrid [4Fe-2O-2S] cluster</name>
        <dbReference type="ChEBI" id="CHEBI:60519"/>
    </ligand>
</feature>
<feature type="binding site" description="via persulfide group" evidence="1">
    <location>
        <position position="425"/>
    </location>
    <ligand>
        <name>hybrid [4Fe-2O-2S] cluster</name>
        <dbReference type="ChEBI" id="CHEBI:60519"/>
    </ligand>
</feature>
<feature type="binding site" evidence="1">
    <location>
        <position position="453"/>
    </location>
    <ligand>
        <name>hybrid [4Fe-2O-2S] cluster</name>
        <dbReference type="ChEBI" id="CHEBI:60519"/>
    </ligand>
</feature>
<feature type="binding site" evidence="1">
    <location>
        <position position="478"/>
    </location>
    <ligand>
        <name>hybrid [4Fe-2O-2S] cluster</name>
        <dbReference type="ChEBI" id="CHEBI:60519"/>
    </ligand>
</feature>
<feature type="binding site" evidence="1">
    <location>
        <position position="513"/>
    </location>
    <ligand>
        <name>hybrid [4Fe-2O-2S] cluster</name>
        <dbReference type="ChEBI" id="CHEBI:60519"/>
    </ligand>
</feature>
<feature type="binding site" evidence="1">
    <location>
        <position position="515"/>
    </location>
    <ligand>
        <name>hybrid [4Fe-2O-2S] cluster</name>
        <dbReference type="ChEBI" id="CHEBI:60519"/>
    </ligand>
</feature>
<feature type="modified residue" description="Cysteine persulfide" evidence="1">
    <location>
        <position position="425"/>
    </location>
</feature>
<proteinExistence type="inferred from homology"/>
<comment type="function">
    <text evidence="1">Catalyzes the reduction of hydroxylamine to form NH(3) and H(2)O.</text>
</comment>
<comment type="catalytic activity">
    <reaction evidence="1">
        <text>A + NH4(+) + H2O = hydroxylamine + AH2 + H(+)</text>
        <dbReference type="Rhea" id="RHEA:22052"/>
        <dbReference type="ChEBI" id="CHEBI:13193"/>
        <dbReference type="ChEBI" id="CHEBI:15377"/>
        <dbReference type="ChEBI" id="CHEBI:15378"/>
        <dbReference type="ChEBI" id="CHEBI:15429"/>
        <dbReference type="ChEBI" id="CHEBI:17499"/>
        <dbReference type="ChEBI" id="CHEBI:28938"/>
        <dbReference type="EC" id="1.7.99.1"/>
    </reaction>
</comment>
<comment type="cofactor">
    <cofactor evidence="1">
        <name>[4Fe-4S] cluster</name>
        <dbReference type="ChEBI" id="CHEBI:49883"/>
    </cofactor>
    <text evidence="1">Binds 1 [4Fe-4S] cluster.</text>
</comment>
<comment type="cofactor">
    <cofactor evidence="1">
        <name>hybrid [4Fe-2O-2S] cluster</name>
        <dbReference type="ChEBI" id="CHEBI:60519"/>
    </cofactor>
    <text evidence="1">Binds 1 hybrid [4Fe-2O-2S] cluster.</text>
</comment>
<comment type="subcellular location">
    <subcellularLocation>
        <location evidence="1">Cytoplasm</location>
    </subcellularLocation>
</comment>
<comment type="similarity">
    <text evidence="1">Belongs to the HCP family.</text>
</comment>
<keyword id="KW-0004">4Fe-4S</keyword>
<keyword id="KW-0963">Cytoplasm</keyword>
<keyword id="KW-0408">Iron</keyword>
<keyword id="KW-0411">Iron-sulfur</keyword>
<keyword id="KW-0479">Metal-binding</keyword>
<keyword id="KW-0560">Oxidoreductase</keyword>
<evidence type="ECO:0000255" key="1">
    <source>
        <dbReference type="HAMAP-Rule" id="MF_00069"/>
    </source>
</evidence>
<dbReference type="EC" id="1.7.99.1" evidence="1"/>
<dbReference type="EMBL" id="CP001581">
    <property type="protein sequence ID" value="ACO86797.1"/>
    <property type="molecule type" value="Genomic_DNA"/>
</dbReference>
<dbReference type="RefSeq" id="WP_003359127.1">
    <property type="nucleotide sequence ID" value="NC_012563.1"/>
</dbReference>
<dbReference type="SMR" id="C1FUX4"/>
<dbReference type="KEGG" id="cby:CLM_3158"/>
<dbReference type="eggNOG" id="COG1151">
    <property type="taxonomic scope" value="Bacteria"/>
</dbReference>
<dbReference type="HOGENOM" id="CLU_038344_2_0_9"/>
<dbReference type="Proteomes" id="UP000001374">
    <property type="component" value="Chromosome"/>
</dbReference>
<dbReference type="GO" id="GO:0005737">
    <property type="term" value="C:cytoplasm"/>
    <property type="evidence" value="ECO:0007669"/>
    <property type="project" value="UniProtKB-SubCell"/>
</dbReference>
<dbReference type="GO" id="GO:0051539">
    <property type="term" value="F:4 iron, 4 sulfur cluster binding"/>
    <property type="evidence" value="ECO:0007669"/>
    <property type="project" value="UniProtKB-KW"/>
</dbReference>
<dbReference type="GO" id="GO:0050418">
    <property type="term" value="F:hydroxylamine reductase activity"/>
    <property type="evidence" value="ECO:0007669"/>
    <property type="project" value="UniProtKB-UniRule"/>
</dbReference>
<dbReference type="GO" id="GO:0046872">
    <property type="term" value="F:metal ion binding"/>
    <property type="evidence" value="ECO:0007669"/>
    <property type="project" value="UniProtKB-KW"/>
</dbReference>
<dbReference type="GO" id="GO:0004601">
    <property type="term" value="F:peroxidase activity"/>
    <property type="evidence" value="ECO:0007669"/>
    <property type="project" value="TreeGrafter"/>
</dbReference>
<dbReference type="GO" id="GO:0042542">
    <property type="term" value="P:response to hydrogen peroxide"/>
    <property type="evidence" value="ECO:0007669"/>
    <property type="project" value="TreeGrafter"/>
</dbReference>
<dbReference type="CDD" id="cd01914">
    <property type="entry name" value="HCP"/>
    <property type="match status" value="1"/>
</dbReference>
<dbReference type="FunFam" id="1.20.1270.20:FF:000001">
    <property type="entry name" value="Hydroxylamine reductase"/>
    <property type="match status" value="1"/>
</dbReference>
<dbReference type="FunFam" id="1.20.1270.20:FF:000003">
    <property type="entry name" value="Hydroxylamine reductase"/>
    <property type="match status" value="1"/>
</dbReference>
<dbReference type="FunFam" id="3.40.50.2030:FF:000001">
    <property type="entry name" value="Hydroxylamine reductase"/>
    <property type="match status" value="1"/>
</dbReference>
<dbReference type="FunFam" id="3.40.50.2030:FF:000002">
    <property type="entry name" value="Hydroxylamine reductase"/>
    <property type="match status" value="1"/>
</dbReference>
<dbReference type="Gene3D" id="1.20.1270.20">
    <property type="match status" value="2"/>
</dbReference>
<dbReference type="Gene3D" id="3.40.50.2030">
    <property type="match status" value="2"/>
</dbReference>
<dbReference type="HAMAP" id="MF_00069">
    <property type="entry name" value="Hydroxylam_reduct"/>
    <property type="match status" value="1"/>
</dbReference>
<dbReference type="InterPro" id="IPR004137">
    <property type="entry name" value="HCP/CODH"/>
</dbReference>
<dbReference type="InterPro" id="IPR010048">
    <property type="entry name" value="Hydroxylam_reduct"/>
</dbReference>
<dbReference type="InterPro" id="IPR016099">
    <property type="entry name" value="Prismane-like_a/b-sand"/>
</dbReference>
<dbReference type="InterPro" id="IPR011254">
    <property type="entry name" value="Prismane-like_sf"/>
</dbReference>
<dbReference type="InterPro" id="IPR016100">
    <property type="entry name" value="Prismane_a-bundle"/>
</dbReference>
<dbReference type="NCBIfam" id="TIGR01703">
    <property type="entry name" value="hybrid_clust"/>
    <property type="match status" value="1"/>
</dbReference>
<dbReference type="NCBIfam" id="NF003658">
    <property type="entry name" value="PRK05290.1"/>
    <property type="match status" value="1"/>
</dbReference>
<dbReference type="PANTHER" id="PTHR30109">
    <property type="entry name" value="HYDROXYLAMINE REDUCTASE"/>
    <property type="match status" value="1"/>
</dbReference>
<dbReference type="PANTHER" id="PTHR30109:SF0">
    <property type="entry name" value="HYDROXYLAMINE REDUCTASE"/>
    <property type="match status" value="1"/>
</dbReference>
<dbReference type="Pfam" id="PF03063">
    <property type="entry name" value="Prismane"/>
    <property type="match status" value="1"/>
</dbReference>
<dbReference type="PIRSF" id="PIRSF000076">
    <property type="entry name" value="HCP"/>
    <property type="match status" value="1"/>
</dbReference>
<dbReference type="SUPFAM" id="SSF56821">
    <property type="entry name" value="Prismane protein-like"/>
    <property type="match status" value="1"/>
</dbReference>
<name>HCP_CLOBJ</name>